<organism>
    <name type="scientific">Mus musculus</name>
    <name type="common">Mouse</name>
    <dbReference type="NCBI Taxonomy" id="10090"/>
    <lineage>
        <taxon>Eukaryota</taxon>
        <taxon>Metazoa</taxon>
        <taxon>Chordata</taxon>
        <taxon>Craniata</taxon>
        <taxon>Vertebrata</taxon>
        <taxon>Euteleostomi</taxon>
        <taxon>Mammalia</taxon>
        <taxon>Eutheria</taxon>
        <taxon>Euarchontoglires</taxon>
        <taxon>Glires</taxon>
        <taxon>Rodentia</taxon>
        <taxon>Myomorpha</taxon>
        <taxon>Muroidea</taxon>
        <taxon>Muridae</taxon>
        <taxon>Murinae</taxon>
        <taxon>Mus</taxon>
        <taxon>Mus</taxon>
    </lineage>
</organism>
<proteinExistence type="evidence at protein level"/>
<accession>Q8BQM4</accession>
<accession>Q8C731</accession>
<comment type="function">
    <text evidence="1">Plays a role in ribosome biogenesis and in nuclear import of the 60S ribosomal protein L5/large ribosomal subunit protein uL18 (RPL5). Required for proper erythrocyte maturation.</text>
</comment>
<comment type="subunit">
    <text evidence="1">Component of a hexameric 5S RNP precursor complex, composed of 5S RNA, RRS1, RPF2/BXDC1, RPL5, RPL11 and HEATR3; this complex acts as a precursor for ribosome assembly.</text>
</comment>
<comment type="similarity">
    <text evidence="3">Belongs to the nuclear import and ribosome assembly adapter family.</text>
</comment>
<keyword id="KW-0265">Erythrocyte maturation</keyword>
<keyword id="KW-0597">Phosphoprotein</keyword>
<keyword id="KW-1185">Reference proteome</keyword>
<keyword id="KW-0677">Repeat</keyword>
<keyword id="KW-0690">Ribosome biogenesis</keyword>
<protein>
    <recommendedName>
        <fullName>HEAT repeat-containing protein 3</fullName>
    </recommendedName>
    <alternativeName>
        <fullName evidence="1">Symportin Syo1</fullName>
    </alternativeName>
</protein>
<reference key="1">
    <citation type="journal article" date="2005" name="Science">
        <title>The transcriptional landscape of the mammalian genome.</title>
        <authorList>
            <person name="Carninci P."/>
            <person name="Kasukawa T."/>
            <person name="Katayama S."/>
            <person name="Gough J."/>
            <person name="Frith M.C."/>
            <person name="Maeda N."/>
            <person name="Oyama R."/>
            <person name="Ravasi T."/>
            <person name="Lenhard B."/>
            <person name="Wells C."/>
            <person name="Kodzius R."/>
            <person name="Shimokawa K."/>
            <person name="Bajic V.B."/>
            <person name="Brenner S.E."/>
            <person name="Batalov S."/>
            <person name="Forrest A.R."/>
            <person name="Zavolan M."/>
            <person name="Davis M.J."/>
            <person name="Wilming L.G."/>
            <person name="Aidinis V."/>
            <person name="Allen J.E."/>
            <person name="Ambesi-Impiombato A."/>
            <person name="Apweiler R."/>
            <person name="Aturaliya R.N."/>
            <person name="Bailey T.L."/>
            <person name="Bansal M."/>
            <person name="Baxter L."/>
            <person name="Beisel K.W."/>
            <person name="Bersano T."/>
            <person name="Bono H."/>
            <person name="Chalk A.M."/>
            <person name="Chiu K.P."/>
            <person name="Choudhary V."/>
            <person name="Christoffels A."/>
            <person name="Clutterbuck D.R."/>
            <person name="Crowe M.L."/>
            <person name="Dalla E."/>
            <person name="Dalrymple B.P."/>
            <person name="de Bono B."/>
            <person name="Della Gatta G."/>
            <person name="di Bernardo D."/>
            <person name="Down T."/>
            <person name="Engstrom P."/>
            <person name="Fagiolini M."/>
            <person name="Faulkner G."/>
            <person name="Fletcher C.F."/>
            <person name="Fukushima T."/>
            <person name="Furuno M."/>
            <person name="Futaki S."/>
            <person name="Gariboldi M."/>
            <person name="Georgii-Hemming P."/>
            <person name="Gingeras T.R."/>
            <person name="Gojobori T."/>
            <person name="Green R.E."/>
            <person name="Gustincich S."/>
            <person name="Harbers M."/>
            <person name="Hayashi Y."/>
            <person name="Hensch T.K."/>
            <person name="Hirokawa N."/>
            <person name="Hill D."/>
            <person name="Huminiecki L."/>
            <person name="Iacono M."/>
            <person name="Ikeo K."/>
            <person name="Iwama A."/>
            <person name="Ishikawa T."/>
            <person name="Jakt M."/>
            <person name="Kanapin A."/>
            <person name="Katoh M."/>
            <person name="Kawasawa Y."/>
            <person name="Kelso J."/>
            <person name="Kitamura H."/>
            <person name="Kitano H."/>
            <person name="Kollias G."/>
            <person name="Krishnan S.P."/>
            <person name="Kruger A."/>
            <person name="Kummerfeld S.K."/>
            <person name="Kurochkin I.V."/>
            <person name="Lareau L.F."/>
            <person name="Lazarevic D."/>
            <person name="Lipovich L."/>
            <person name="Liu J."/>
            <person name="Liuni S."/>
            <person name="McWilliam S."/>
            <person name="Madan Babu M."/>
            <person name="Madera M."/>
            <person name="Marchionni L."/>
            <person name="Matsuda H."/>
            <person name="Matsuzawa S."/>
            <person name="Miki H."/>
            <person name="Mignone F."/>
            <person name="Miyake S."/>
            <person name="Morris K."/>
            <person name="Mottagui-Tabar S."/>
            <person name="Mulder N."/>
            <person name="Nakano N."/>
            <person name="Nakauchi H."/>
            <person name="Ng P."/>
            <person name="Nilsson R."/>
            <person name="Nishiguchi S."/>
            <person name="Nishikawa S."/>
            <person name="Nori F."/>
            <person name="Ohara O."/>
            <person name="Okazaki Y."/>
            <person name="Orlando V."/>
            <person name="Pang K.C."/>
            <person name="Pavan W.J."/>
            <person name="Pavesi G."/>
            <person name="Pesole G."/>
            <person name="Petrovsky N."/>
            <person name="Piazza S."/>
            <person name="Reed J."/>
            <person name="Reid J.F."/>
            <person name="Ring B.Z."/>
            <person name="Ringwald M."/>
            <person name="Rost B."/>
            <person name="Ruan Y."/>
            <person name="Salzberg S.L."/>
            <person name="Sandelin A."/>
            <person name="Schneider C."/>
            <person name="Schoenbach C."/>
            <person name="Sekiguchi K."/>
            <person name="Semple C.A."/>
            <person name="Seno S."/>
            <person name="Sessa L."/>
            <person name="Sheng Y."/>
            <person name="Shibata Y."/>
            <person name="Shimada H."/>
            <person name="Shimada K."/>
            <person name="Silva D."/>
            <person name="Sinclair B."/>
            <person name="Sperling S."/>
            <person name="Stupka E."/>
            <person name="Sugiura K."/>
            <person name="Sultana R."/>
            <person name="Takenaka Y."/>
            <person name="Taki K."/>
            <person name="Tammoja K."/>
            <person name="Tan S.L."/>
            <person name="Tang S."/>
            <person name="Taylor M.S."/>
            <person name="Tegner J."/>
            <person name="Teichmann S.A."/>
            <person name="Ueda H.R."/>
            <person name="van Nimwegen E."/>
            <person name="Verardo R."/>
            <person name="Wei C.L."/>
            <person name="Yagi K."/>
            <person name="Yamanishi H."/>
            <person name="Zabarovsky E."/>
            <person name="Zhu S."/>
            <person name="Zimmer A."/>
            <person name="Hide W."/>
            <person name="Bult C."/>
            <person name="Grimmond S.M."/>
            <person name="Teasdale R.D."/>
            <person name="Liu E.T."/>
            <person name="Brusic V."/>
            <person name="Quackenbush J."/>
            <person name="Wahlestedt C."/>
            <person name="Mattick J.S."/>
            <person name="Hume D.A."/>
            <person name="Kai C."/>
            <person name="Sasaki D."/>
            <person name="Tomaru Y."/>
            <person name="Fukuda S."/>
            <person name="Kanamori-Katayama M."/>
            <person name="Suzuki M."/>
            <person name="Aoki J."/>
            <person name="Arakawa T."/>
            <person name="Iida J."/>
            <person name="Imamura K."/>
            <person name="Itoh M."/>
            <person name="Kato T."/>
            <person name="Kawaji H."/>
            <person name="Kawagashira N."/>
            <person name="Kawashima T."/>
            <person name="Kojima M."/>
            <person name="Kondo S."/>
            <person name="Konno H."/>
            <person name="Nakano K."/>
            <person name="Ninomiya N."/>
            <person name="Nishio T."/>
            <person name="Okada M."/>
            <person name="Plessy C."/>
            <person name="Shibata K."/>
            <person name="Shiraki T."/>
            <person name="Suzuki S."/>
            <person name="Tagami M."/>
            <person name="Waki K."/>
            <person name="Watahiki A."/>
            <person name="Okamura-Oho Y."/>
            <person name="Suzuki H."/>
            <person name="Kawai J."/>
            <person name="Hayashizaki Y."/>
        </authorList>
    </citation>
    <scope>NUCLEOTIDE SEQUENCE [LARGE SCALE MRNA]</scope>
    <source>
        <strain>C57BL/6J</strain>
        <tissue>Corpus striatum</tissue>
        <tissue>Kidney</tissue>
    </source>
</reference>
<reference key="2">
    <citation type="journal article" date="2004" name="Genome Res.">
        <title>The status, quality, and expansion of the NIH full-length cDNA project: the Mammalian Gene Collection (MGC).</title>
        <authorList>
            <consortium name="The MGC Project Team"/>
        </authorList>
    </citation>
    <scope>NUCLEOTIDE SEQUENCE [LARGE SCALE MRNA]</scope>
    <source>
        <strain>C57BL/6J</strain>
        <tissue>Brain</tissue>
    </source>
</reference>
<reference key="3">
    <citation type="journal article" date="2010" name="Cell">
        <title>A tissue-specific atlas of mouse protein phosphorylation and expression.</title>
        <authorList>
            <person name="Huttlin E.L."/>
            <person name="Jedrychowski M.P."/>
            <person name="Elias J.E."/>
            <person name="Goswami T."/>
            <person name="Rad R."/>
            <person name="Beausoleil S.A."/>
            <person name="Villen J."/>
            <person name="Haas W."/>
            <person name="Sowa M.E."/>
            <person name="Gygi S.P."/>
        </authorList>
    </citation>
    <scope>PHOSPHORYLATION [LARGE SCALE ANALYSIS] AT SER-15 AND SER-144</scope>
    <scope>IDENTIFICATION BY MASS SPECTROMETRY [LARGE SCALE ANALYSIS]</scope>
    <source>
        <tissue>Brain</tissue>
        <tissue>Kidney</tissue>
        <tissue>Liver</tissue>
        <tissue>Lung</tissue>
        <tissue>Spleen</tissue>
        <tissue>Testis</tissue>
    </source>
</reference>
<name>HEAT3_MOUSE</name>
<evidence type="ECO:0000250" key="1">
    <source>
        <dbReference type="UniProtKB" id="Q7Z4Q2"/>
    </source>
</evidence>
<evidence type="ECO:0000256" key="2">
    <source>
        <dbReference type="SAM" id="MobiDB-lite"/>
    </source>
</evidence>
<evidence type="ECO:0000305" key="3"/>
<evidence type="ECO:0007744" key="4">
    <source>
    </source>
</evidence>
<sequence length="679" mass="74305">MGKSRTKRFKRPQFSPIESCQAEAAAASNGTGDEEDDGPAAELLEKLQHPSAEVRECACAGLARLVQQRPALPDLARRDAVRRLGPLLLDSSLAVRETAAGALRNLSACGGFDVCDDMVAKDIMTPLVALLRECLSGLDSNEMSPQEKADKRNPVESIANEAVNVLWNVCECSGRAVSIFNKEGCLEIVLQYLRRFPTSIDLAVSVAYCLQTVTEDNPELLKSFDGTALRVLESALLCPVASMEYILLKTLVAGTIWNLKDIIPSKSQAEIINAILGALSEVLGMNTGNMVIQMKEAETQRLKTAAESEDILANANGDDLVEDDEMEEIPHKRKLRRKTFISDLLPPTDKELREAMALLTAQQTALEVIVNMCCSEDPSDDEWEELSSSDESEAFMENSFSECSGHLMSPLCLSHEIHSALTNCLIPEKVFEKTSSPNSVAVDICSKNPTWKPLIRKMNTIQCRALMCLQSLVSLLDIDHLGGAPALQTLAQHLSQILFSQPDFAKHDDFLEAISSALRALLQTMASKNIPQCMTPEQLMTLCREGIHSSSIGVRVNVVSILGITGSVLAKDDGTLDTLKTIGCFLLEVATKDPSLVVTGEALDALFDVFADGEAAEKASVQIKLLAALKEFQPVFKMKIRKEGRGKYSPDQLCVLDNVKMNLRRFIAYQETVEKRLTS</sequence>
<feature type="chain" id="PRO_0000050822" description="HEAT repeat-containing protein 3">
    <location>
        <begin position="1"/>
        <end position="679"/>
    </location>
</feature>
<feature type="repeat" description="HEAT 1">
    <location>
        <begin position="38"/>
        <end position="69"/>
    </location>
</feature>
<feature type="repeat" description="HEAT 2">
    <location>
        <begin position="74"/>
        <end position="110"/>
    </location>
</feature>
<feature type="region of interest" description="Disordered" evidence="2">
    <location>
        <begin position="1"/>
        <end position="40"/>
    </location>
</feature>
<feature type="compositionally biased region" description="Basic residues" evidence="2">
    <location>
        <begin position="1"/>
        <end position="11"/>
    </location>
</feature>
<feature type="modified residue" description="Phosphoserine" evidence="4">
    <location>
        <position position="15"/>
    </location>
</feature>
<feature type="modified residue" description="Phosphoserine" evidence="4">
    <location>
        <position position="144"/>
    </location>
</feature>
<feature type="modified residue" description="Phosphothreonine" evidence="1">
    <location>
        <position position="339"/>
    </location>
</feature>
<feature type="sequence conflict" description="In Ref. 1; BAC35071." evidence="3" ref="1">
    <original>V</original>
    <variation>A</variation>
    <location>
        <position position="282"/>
    </location>
</feature>
<feature type="sequence conflict" description="In Ref. 1; BAC35071." evidence="3" ref="1">
    <original>M</original>
    <variation>I</variation>
    <location>
        <position position="467"/>
    </location>
</feature>
<dbReference type="EMBL" id="AK047782">
    <property type="protein sequence ID" value="BAC33155.1"/>
    <property type="molecule type" value="mRNA"/>
</dbReference>
<dbReference type="EMBL" id="AK052635">
    <property type="protein sequence ID" value="BAC35071.1"/>
    <property type="molecule type" value="mRNA"/>
</dbReference>
<dbReference type="EMBL" id="BC065060">
    <property type="protein sequence ID" value="AAH65060.1"/>
    <property type="molecule type" value="mRNA"/>
</dbReference>
<dbReference type="CCDS" id="CCDS22508.1"/>
<dbReference type="RefSeq" id="NP_766345.3">
    <property type="nucleotide sequence ID" value="NM_172757.3"/>
</dbReference>
<dbReference type="SMR" id="Q8BQM4"/>
<dbReference type="BioGRID" id="231539">
    <property type="interactions" value="2"/>
</dbReference>
<dbReference type="FunCoup" id="Q8BQM4">
    <property type="interactions" value="623"/>
</dbReference>
<dbReference type="STRING" id="10090.ENSMUSP00000034079"/>
<dbReference type="GlyGen" id="Q8BQM4">
    <property type="glycosylation" value="2 sites, 1 N-linked glycan (1 site), 1 O-linked glycan (1 site)"/>
</dbReference>
<dbReference type="iPTMnet" id="Q8BQM4"/>
<dbReference type="PhosphoSitePlus" id="Q8BQM4"/>
<dbReference type="jPOST" id="Q8BQM4"/>
<dbReference type="PaxDb" id="10090-ENSMUSP00000034079"/>
<dbReference type="PeptideAtlas" id="Q8BQM4"/>
<dbReference type="ProteomicsDB" id="269553"/>
<dbReference type="Pumba" id="Q8BQM4"/>
<dbReference type="Antibodypedia" id="49437">
    <property type="antibodies" value="63 antibodies from 11 providers"/>
</dbReference>
<dbReference type="DNASU" id="234549"/>
<dbReference type="Ensembl" id="ENSMUST00000034079.14">
    <property type="protein sequence ID" value="ENSMUSP00000034079.8"/>
    <property type="gene ID" value="ENSMUSG00000031657.17"/>
</dbReference>
<dbReference type="GeneID" id="234549"/>
<dbReference type="KEGG" id="mmu:234549"/>
<dbReference type="UCSC" id="uc009mrc.1">
    <property type="organism name" value="mouse"/>
</dbReference>
<dbReference type="AGR" id="MGI:2444491"/>
<dbReference type="CTD" id="55027"/>
<dbReference type="MGI" id="MGI:2444491">
    <property type="gene designation" value="Heatr3"/>
</dbReference>
<dbReference type="VEuPathDB" id="HostDB:ENSMUSG00000031657"/>
<dbReference type="eggNOG" id="ENOG502QWR9">
    <property type="taxonomic scope" value="Eukaryota"/>
</dbReference>
<dbReference type="GeneTree" id="ENSGT00390000012529"/>
<dbReference type="HOGENOM" id="CLU_028600_0_0_1"/>
<dbReference type="InParanoid" id="Q8BQM4"/>
<dbReference type="OMA" id="ENELHAD"/>
<dbReference type="OrthoDB" id="288703at2759"/>
<dbReference type="PhylomeDB" id="Q8BQM4"/>
<dbReference type="TreeFam" id="TF324159"/>
<dbReference type="BioGRID-ORCS" id="234549">
    <property type="hits" value="23 hits in 79 CRISPR screens"/>
</dbReference>
<dbReference type="ChiTaRS" id="Heatr3">
    <property type="organism name" value="mouse"/>
</dbReference>
<dbReference type="PRO" id="PR:Q8BQM4"/>
<dbReference type="Proteomes" id="UP000000589">
    <property type="component" value="Chromosome 8"/>
</dbReference>
<dbReference type="RNAct" id="Q8BQM4">
    <property type="molecule type" value="protein"/>
</dbReference>
<dbReference type="Bgee" id="ENSMUSG00000031657">
    <property type="expression patterns" value="Expressed in ectoplacental cone and 220 other cell types or tissues"/>
</dbReference>
<dbReference type="ExpressionAtlas" id="Q8BQM4">
    <property type="expression patterns" value="baseline and differential"/>
</dbReference>
<dbReference type="GO" id="GO:0043249">
    <property type="term" value="P:erythrocyte maturation"/>
    <property type="evidence" value="ECO:0000250"/>
    <property type="project" value="UniProtKB"/>
</dbReference>
<dbReference type="GO" id="GO:0006606">
    <property type="term" value="P:protein import into nucleus"/>
    <property type="evidence" value="ECO:0000250"/>
    <property type="project" value="UniProtKB"/>
</dbReference>
<dbReference type="GO" id="GO:0042273">
    <property type="term" value="P:ribosomal large subunit biogenesis"/>
    <property type="evidence" value="ECO:0000250"/>
    <property type="project" value="UniProtKB"/>
</dbReference>
<dbReference type="CDD" id="cd13394">
    <property type="entry name" value="Syo1_like"/>
    <property type="match status" value="1"/>
</dbReference>
<dbReference type="FunFam" id="1.25.10.10:FF:000581">
    <property type="entry name" value="HEAT repeat-containing protein 3 isoform X2"/>
    <property type="match status" value="1"/>
</dbReference>
<dbReference type="FunFam" id="1.25.10.10:FF:000744">
    <property type="entry name" value="HEAT repeat-containing protein 3 isoform X2"/>
    <property type="match status" value="1"/>
</dbReference>
<dbReference type="Gene3D" id="1.25.10.10">
    <property type="entry name" value="Leucine-rich Repeat Variant"/>
    <property type="match status" value="2"/>
</dbReference>
<dbReference type="InterPro" id="IPR011989">
    <property type="entry name" value="ARM-like"/>
</dbReference>
<dbReference type="InterPro" id="IPR016024">
    <property type="entry name" value="ARM-type_fold"/>
</dbReference>
<dbReference type="InterPro" id="IPR052616">
    <property type="entry name" value="Nuclear_Import_Ribosome_Adapt"/>
</dbReference>
<dbReference type="PANTHER" id="PTHR13347">
    <property type="entry name" value="HEAT REPEAT-CONTAINING PROTEIN 3"/>
    <property type="match status" value="1"/>
</dbReference>
<dbReference type="PANTHER" id="PTHR13347:SF1">
    <property type="entry name" value="HEAT REPEAT-CONTAINING PROTEIN 3"/>
    <property type="match status" value="1"/>
</dbReference>
<dbReference type="Pfam" id="PF13513">
    <property type="entry name" value="HEAT_EZ"/>
    <property type="match status" value="1"/>
</dbReference>
<dbReference type="SUPFAM" id="SSF48371">
    <property type="entry name" value="ARM repeat"/>
    <property type="match status" value="1"/>
</dbReference>
<gene>
    <name type="primary">Heatr3</name>
</gene>